<dbReference type="EC" id="2.4.2.9" evidence="1"/>
<dbReference type="EMBL" id="CU459141">
    <property type="protein sequence ID" value="CAM87866.1"/>
    <property type="molecule type" value="Genomic_DNA"/>
</dbReference>
<dbReference type="RefSeq" id="WP_001007343.1">
    <property type="nucleotide sequence ID" value="NZ_JBDGFB010000027.1"/>
</dbReference>
<dbReference type="SMR" id="B0V8B1"/>
<dbReference type="EnsemblBacteria" id="CAM87866">
    <property type="protein sequence ID" value="CAM87866"/>
    <property type="gene ID" value="ABAYE3047"/>
</dbReference>
<dbReference type="GeneID" id="92892695"/>
<dbReference type="KEGG" id="aby:ABAYE3047"/>
<dbReference type="HOGENOM" id="CLU_067096_2_2_6"/>
<dbReference type="UniPathway" id="UPA00574">
    <property type="reaction ID" value="UER00636"/>
</dbReference>
<dbReference type="GO" id="GO:0005525">
    <property type="term" value="F:GTP binding"/>
    <property type="evidence" value="ECO:0007669"/>
    <property type="project" value="UniProtKB-KW"/>
</dbReference>
<dbReference type="GO" id="GO:0000287">
    <property type="term" value="F:magnesium ion binding"/>
    <property type="evidence" value="ECO:0007669"/>
    <property type="project" value="UniProtKB-UniRule"/>
</dbReference>
<dbReference type="GO" id="GO:0004845">
    <property type="term" value="F:uracil phosphoribosyltransferase activity"/>
    <property type="evidence" value="ECO:0007669"/>
    <property type="project" value="UniProtKB-UniRule"/>
</dbReference>
<dbReference type="GO" id="GO:0044206">
    <property type="term" value="P:UMP salvage"/>
    <property type="evidence" value="ECO:0007669"/>
    <property type="project" value="UniProtKB-UniRule"/>
</dbReference>
<dbReference type="GO" id="GO:0006223">
    <property type="term" value="P:uracil salvage"/>
    <property type="evidence" value="ECO:0007669"/>
    <property type="project" value="InterPro"/>
</dbReference>
<dbReference type="CDD" id="cd06223">
    <property type="entry name" value="PRTases_typeI"/>
    <property type="match status" value="1"/>
</dbReference>
<dbReference type="FunFam" id="3.40.50.2020:FF:000003">
    <property type="entry name" value="Uracil phosphoribosyltransferase"/>
    <property type="match status" value="1"/>
</dbReference>
<dbReference type="Gene3D" id="3.40.50.2020">
    <property type="match status" value="1"/>
</dbReference>
<dbReference type="HAMAP" id="MF_01218_B">
    <property type="entry name" value="Upp_B"/>
    <property type="match status" value="1"/>
</dbReference>
<dbReference type="InterPro" id="IPR000836">
    <property type="entry name" value="PRibTrfase_dom"/>
</dbReference>
<dbReference type="InterPro" id="IPR029057">
    <property type="entry name" value="PRTase-like"/>
</dbReference>
<dbReference type="InterPro" id="IPR034332">
    <property type="entry name" value="Upp_B"/>
</dbReference>
<dbReference type="InterPro" id="IPR050054">
    <property type="entry name" value="UPRTase/APRTase"/>
</dbReference>
<dbReference type="InterPro" id="IPR005765">
    <property type="entry name" value="Ura_phspho_trans"/>
</dbReference>
<dbReference type="NCBIfam" id="NF001097">
    <property type="entry name" value="PRK00129.1"/>
    <property type="match status" value="1"/>
</dbReference>
<dbReference type="NCBIfam" id="TIGR01091">
    <property type="entry name" value="upp"/>
    <property type="match status" value="1"/>
</dbReference>
<dbReference type="PANTHER" id="PTHR32315">
    <property type="entry name" value="ADENINE PHOSPHORIBOSYLTRANSFERASE"/>
    <property type="match status" value="1"/>
</dbReference>
<dbReference type="PANTHER" id="PTHR32315:SF4">
    <property type="entry name" value="URACIL PHOSPHORIBOSYLTRANSFERASE, CHLOROPLASTIC"/>
    <property type="match status" value="1"/>
</dbReference>
<dbReference type="Pfam" id="PF14681">
    <property type="entry name" value="UPRTase"/>
    <property type="match status" value="1"/>
</dbReference>
<dbReference type="SUPFAM" id="SSF53271">
    <property type="entry name" value="PRTase-like"/>
    <property type="match status" value="1"/>
</dbReference>
<comment type="function">
    <text evidence="1">Catalyzes the conversion of uracil and 5-phospho-alpha-D-ribose 1-diphosphate (PRPP) to UMP and diphosphate.</text>
</comment>
<comment type="catalytic activity">
    <reaction evidence="1">
        <text>UMP + diphosphate = 5-phospho-alpha-D-ribose 1-diphosphate + uracil</text>
        <dbReference type="Rhea" id="RHEA:13017"/>
        <dbReference type="ChEBI" id="CHEBI:17568"/>
        <dbReference type="ChEBI" id="CHEBI:33019"/>
        <dbReference type="ChEBI" id="CHEBI:57865"/>
        <dbReference type="ChEBI" id="CHEBI:58017"/>
        <dbReference type="EC" id="2.4.2.9"/>
    </reaction>
</comment>
<comment type="cofactor">
    <cofactor evidence="1">
        <name>Mg(2+)</name>
        <dbReference type="ChEBI" id="CHEBI:18420"/>
    </cofactor>
    <text evidence="1">Binds 1 Mg(2+) ion per subunit. The magnesium is bound as Mg-PRPP.</text>
</comment>
<comment type="activity regulation">
    <text evidence="1">Allosterically activated by GTP.</text>
</comment>
<comment type="pathway">
    <text evidence="1">Pyrimidine metabolism; UMP biosynthesis via salvage pathway; UMP from uracil: step 1/1.</text>
</comment>
<comment type="similarity">
    <text evidence="1">Belongs to the UPRTase family.</text>
</comment>
<reference key="1">
    <citation type="journal article" date="2008" name="PLoS ONE">
        <title>Comparative analysis of Acinetobacters: three genomes for three lifestyles.</title>
        <authorList>
            <person name="Vallenet D."/>
            <person name="Nordmann P."/>
            <person name="Barbe V."/>
            <person name="Poirel L."/>
            <person name="Mangenot S."/>
            <person name="Bataille E."/>
            <person name="Dossat C."/>
            <person name="Gas S."/>
            <person name="Kreimeyer A."/>
            <person name="Lenoble P."/>
            <person name="Oztas S."/>
            <person name="Poulain J."/>
            <person name="Segurens B."/>
            <person name="Robert C."/>
            <person name="Abergel C."/>
            <person name="Claverie J.-M."/>
            <person name="Raoult D."/>
            <person name="Medigue C."/>
            <person name="Weissenbach J."/>
            <person name="Cruveiller S."/>
        </authorList>
    </citation>
    <scope>NUCLEOTIDE SEQUENCE [LARGE SCALE GENOMIC DNA]</scope>
    <source>
        <strain>AYE</strain>
    </source>
</reference>
<protein>
    <recommendedName>
        <fullName evidence="1">Uracil phosphoribosyltransferase</fullName>
        <ecNumber evidence="1">2.4.2.9</ecNumber>
    </recommendedName>
    <alternativeName>
        <fullName evidence="1">UMP pyrophosphorylase</fullName>
    </alternativeName>
    <alternativeName>
        <fullName evidence="1">UPRTase</fullName>
    </alternativeName>
</protein>
<accession>B0V8B1</accession>
<proteinExistence type="inferred from homology"/>
<evidence type="ECO:0000255" key="1">
    <source>
        <dbReference type="HAMAP-Rule" id="MF_01218"/>
    </source>
</evidence>
<sequence length="211" mass="22833">MAIQEIRHPLIRHKLGLLRRADISTKNFRELAQEVTMLLTYEATKDLPVVDCEIEGWAGNVTTQRIAGKKITIVPILRAGIGMLDGVLNLIPSAKVSVLGLERDEATLEVRTYYKKLVPDVANRIAMIIDPMLATGNSLVAAIDVLKASGCKDIRVMVLVAAPEGIAKVEAAHPDIQLYTASIDNGLNEHGYIVPGLGDAGDKIFGSVQKD</sequence>
<keyword id="KW-0021">Allosteric enzyme</keyword>
<keyword id="KW-0328">Glycosyltransferase</keyword>
<keyword id="KW-0342">GTP-binding</keyword>
<keyword id="KW-0460">Magnesium</keyword>
<keyword id="KW-0547">Nucleotide-binding</keyword>
<keyword id="KW-0808">Transferase</keyword>
<gene>
    <name evidence="1" type="primary">upp</name>
    <name type="ordered locus">ABAYE3047</name>
</gene>
<organism>
    <name type="scientific">Acinetobacter baumannii (strain AYE)</name>
    <dbReference type="NCBI Taxonomy" id="509173"/>
    <lineage>
        <taxon>Bacteria</taxon>
        <taxon>Pseudomonadati</taxon>
        <taxon>Pseudomonadota</taxon>
        <taxon>Gammaproteobacteria</taxon>
        <taxon>Moraxellales</taxon>
        <taxon>Moraxellaceae</taxon>
        <taxon>Acinetobacter</taxon>
        <taxon>Acinetobacter calcoaceticus/baumannii complex</taxon>
    </lineage>
</organism>
<name>UPP_ACIBY</name>
<feature type="chain" id="PRO_1000139087" description="Uracil phosphoribosyltransferase">
    <location>
        <begin position="1"/>
        <end position="211"/>
    </location>
</feature>
<feature type="binding site" evidence="1">
    <location>
        <position position="78"/>
    </location>
    <ligand>
        <name>5-phospho-alpha-D-ribose 1-diphosphate</name>
        <dbReference type="ChEBI" id="CHEBI:58017"/>
    </ligand>
</feature>
<feature type="binding site" evidence="1">
    <location>
        <position position="103"/>
    </location>
    <ligand>
        <name>5-phospho-alpha-D-ribose 1-diphosphate</name>
        <dbReference type="ChEBI" id="CHEBI:58017"/>
    </ligand>
</feature>
<feature type="binding site" evidence="1">
    <location>
        <begin position="130"/>
        <end position="138"/>
    </location>
    <ligand>
        <name>5-phospho-alpha-D-ribose 1-diphosphate</name>
        <dbReference type="ChEBI" id="CHEBI:58017"/>
    </ligand>
</feature>
<feature type="binding site" evidence="1">
    <location>
        <position position="193"/>
    </location>
    <ligand>
        <name>uracil</name>
        <dbReference type="ChEBI" id="CHEBI:17568"/>
    </ligand>
</feature>
<feature type="binding site" evidence="1">
    <location>
        <begin position="198"/>
        <end position="200"/>
    </location>
    <ligand>
        <name>uracil</name>
        <dbReference type="ChEBI" id="CHEBI:17568"/>
    </ligand>
</feature>
<feature type="binding site" evidence="1">
    <location>
        <position position="199"/>
    </location>
    <ligand>
        <name>5-phospho-alpha-D-ribose 1-diphosphate</name>
        <dbReference type="ChEBI" id="CHEBI:58017"/>
    </ligand>
</feature>